<evidence type="ECO:0000250" key="1">
    <source>
        <dbReference type="UniProtKB" id="B5HDJ6"/>
    </source>
</evidence>
<evidence type="ECO:0000269" key="2">
    <source>
    </source>
</evidence>
<evidence type="ECO:0000269" key="3">
    <source>
    </source>
</evidence>
<evidence type="ECO:0000303" key="4">
    <source>
    </source>
</evidence>
<evidence type="ECO:0000305" key="5"/>
<evidence type="ECO:0000305" key="6">
    <source>
    </source>
</evidence>
<evidence type="ECO:0000305" key="7">
    <source>
    </source>
</evidence>
<keyword id="KW-0456">Lyase</keyword>
<keyword id="KW-0460">Magnesium</keyword>
<keyword id="KW-0479">Metal-binding</keyword>
<organism>
    <name type="scientific">Streptomyces cyslabdanicus</name>
    <dbReference type="NCBI Taxonomy" id="1470456"/>
    <lineage>
        <taxon>Bacteria</taxon>
        <taxon>Bacillati</taxon>
        <taxon>Actinomycetota</taxon>
        <taxon>Actinomycetes</taxon>
        <taxon>Kitasatosporales</taxon>
        <taxon>Streptomycetaceae</taxon>
        <taxon>Streptomyces</taxon>
    </lineage>
</organism>
<proteinExistence type="evidence at protein level"/>
<feature type="chain" id="PRO_0000444807" description="(12E)-labda-8(17),12,14-triene synthase">
    <location>
        <begin position="1"/>
        <end position="329"/>
    </location>
</feature>
<feature type="short sequence motif" description="DDXXXE motif" evidence="6 7">
    <location>
        <begin position="90"/>
        <end position="95"/>
    </location>
</feature>
<feature type="short sequence motif" description="NXXXSXXXE motif" evidence="6 7">
    <location>
        <begin position="230"/>
        <end position="238"/>
    </location>
</feature>
<feature type="binding site" evidence="1">
    <location>
        <position position="90"/>
    </location>
    <ligand>
        <name>Mg(2+)</name>
        <dbReference type="ChEBI" id="CHEBI:18420"/>
        <label>1</label>
    </ligand>
</feature>
<feature type="binding site" evidence="1">
    <location>
        <position position="95"/>
    </location>
    <ligand>
        <name>Mg(2+)</name>
        <dbReference type="ChEBI" id="CHEBI:18420"/>
        <label>1</label>
    </ligand>
</feature>
<feature type="binding site" evidence="1">
    <location>
        <position position="95"/>
    </location>
    <ligand>
        <name>Mg(2+)</name>
        <dbReference type="ChEBI" id="CHEBI:18420"/>
        <label>2</label>
    </ligand>
</feature>
<feature type="binding site" evidence="1">
    <location>
        <position position="184"/>
    </location>
    <ligand>
        <name>substrate</name>
    </ligand>
</feature>
<feature type="binding site" evidence="1">
    <location>
        <position position="230"/>
    </location>
    <ligand>
        <name>Mg(2+)</name>
        <dbReference type="ChEBI" id="CHEBI:18420"/>
        <label>3</label>
    </ligand>
</feature>
<feature type="binding site" evidence="1">
    <location>
        <position position="234"/>
    </location>
    <ligand>
        <name>Mg(2+)</name>
        <dbReference type="ChEBI" id="CHEBI:18420"/>
        <label>3</label>
    </ligand>
</feature>
<feature type="binding site" evidence="1">
    <location>
        <position position="237"/>
    </location>
    <ligand>
        <name>substrate</name>
    </ligand>
</feature>
<feature type="binding site" evidence="1">
    <location>
        <position position="238"/>
    </location>
    <ligand>
        <name>Mg(2+)</name>
        <dbReference type="ChEBI" id="CHEBI:18420"/>
        <label>3</label>
    </ligand>
</feature>
<feature type="binding site" evidence="1">
    <location>
        <begin position="316"/>
        <end position="317"/>
    </location>
    <ligand>
        <name>substrate</name>
    </ligand>
</feature>
<protein>
    <recommendedName>
        <fullName evidence="4">(12E)-labda-8(17),12,14-triene synthase</fullName>
        <ecNumber evidence="3">4.2.3.193</ecNumber>
    </recommendedName>
    <alternativeName>
        <fullName evidence="4">Type-A diterpene synthase</fullName>
    </alternativeName>
</protein>
<reference key="1">
    <citation type="journal article" date="2016" name="J. Ind. Microbiol. Biotechnol.">
        <title>Biosynthesis of mercapturic acid derivative of the labdane-type diterpene, cyslabdan that potentiates imipenem activity against methicillin-resistant Staphylococcus aureus: cyslabdan is generated by mycothiol-mediated xenobiotic detoxification.</title>
        <authorList>
            <person name="Ikeda H."/>
            <person name="Shin-ya K."/>
            <person name="Nagamitsu T."/>
            <person name="Tomoda H."/>
        </authorList>
    </citation>
    <scope>NUCLEOTIDE SEQUENCE [GENOMIC DNA]</scope>
    <scope>FUNCTION</scope>
    <scope>DOMAIN</scope>
    <source>
        <strain>DSM 42135 / NBRC 110081 / K04-0144</strain>
    </source>
</reference>
<reference key="2">
    <citation type="journal article" date="2016" name="J. Antibiot.">
        <title>Chemical diversity of labdane-type bicyclic diterpene biosynthesis in Actinomycetales microorganisms.</title>
        <authorList>
            <person name="Yamada Y."/>
            <person name="Komatsu M."/>
            <person name="Ikeda H."/>
        </authorList>
    </citation>
    <scope>FUNCTION</scope>
    <scope>CATALYTIC ACTIVITY</scope>
    <scope>COFACTOR</scope>
    <scope>DOMAIN</scope>
    <source>
        <strain>DSM 42135 / NBRC 110081 / K04-0144</strain>
    </source>
</reference>
<dbReference type="EC" id="4.2.3.193" evidence="3"/>
<dbReference type="EMBL" id="LC064028">
    <property type="protein sequence ID" value="BAR97453.1"/>
    <property type="molecule type" value="Genomic_DNA"/>
</dbReference>
<dbReference type="SMR" id="A0A0H5BN57"/>
<dbReference type="KEGG" id="ag:BAR97453"/>
<dbReference type="BRENDA" id="4.2.3.193">
    <property type="organism ID" value="15347"/>
</dbReference>
<dbReference type="GO" id="GO:0046872">
    <property type="term" value="F:metal ion binding"/>
    <property type="evidence" value="ECO:0007669"/>
    <property type="project" value="UniProtKB-KW"/>
</dbReference>
<dbReference type="GO" id="GO:0010333">
    <property type="term" value="F:terpene synthase activity"/>
    <property type="evidence" value="ECO:0007669"/>
    <property type="project" value="InterPro"/>
</dbReference>
<dbReference type="Gene3D" id="1.10.600.10">
    <property type="entry name" value="Farnesyl Diphosphate Synthase"/>
    <property type="match status" value="1"/>
</dbReference>
<dbReference type="InterPro" id="IPR008949">
    <property type="entry name" value="Isoprenoid_synthase_dom_sf"/>
</dbReference>
<dbReference type="InterPro" id="IPR034686">
    <property type="entry name" value="Terpene_cyclase-like_2"/>
</dbReference>
<dbReference type="Pfam" id="PF19086">
    <property type="entry name" value="Terpene_syn_C_2"/>
    <property type="match status" value="1"/>
</dbReference>
<dbReference type="SFLD" id="SFLDS00005">
    <property type="entry name" value="Isoprenoid_Synthase_Type_I"/>
    <property type="match status" value="1"/>
</dbReference>
<dbReference type="SFLD" id="SFLDG01020">
    <property type="entry name" value="Terpene_Cyclase_Like_2"/>
    <property type="match status" value="1"/>
</dbReference>
<dbReference type="SUPFAM" id="SSF48576">
    <property type="entry name" value="Terpenoid synthases"/>
    <property type="match status" value="1"/>
</dbReference>
<accession>A0A0H5BN57</accession>
<comment type="function">
    <text evidence="2 3">Involved in the biosynthesis of the mercapturic acid derivative diterpene cyslabdan A, a potentiator of the beta-lactam antibiotic imipenem (PubMed:26507838). Catalyzes the conversion of (+)-copalyl diphosphate to yield labda-8(17),12(E),14-triene (biformene) (PubMed:26507838, PubMed:26814669).</text>
</comment>
<comment type="catalytic activity">
    <reaction evidence="7">
        <text>(+)-copalyl diphosphate = (12E)-labda-8(17),12,14-triene + diphosphate</text>
        <dbReference type="Rhea" id="RHEA:54640"/>
        <dbReference type="ChEBI" id="CHEBI:33019"/>
        <dbReference type="ChEBI" id="CHEBI:58635"/>
        <dbReference type="ChEBI" id="CHEBI:138302"/>
        <dbReference type="EC" id="4.2.3.193"/>
    </reaction>
</comment>
<comment type="cofactor">
    <cofactor evidence="7">
        <name>Mg(2+)</name>
        <dbReference type="ChEBI" id="CHEBI:18420"/>
    </cofactor>
    <text evidence="1">Binds 3 Mg(2+) ions per subunit.</text>
</comment>
<comment type="domain">
    <text evidence="6 7">The Asp-Asp-Xaa-Xaa-Xaa-Glu (DDXXXE) and Asn-Xaa-Xaa-Xaa-Ser-Xaa-Xaa-Xaa-Glu (NSE) motifs are important for the catalytic activity, presumably through binding to Mg(2+).</text>
</comment>
<comment type="similarity">
    <text evidence="5">Belongs to the terpene synthase family.</text>
</comment>
<name>CLDD_STRCP</name>
<sequence length="329" mass="35699">MTRTGDAVTILPQPDFTATFPGPFPTSPHGERTERQLLGWLEEYPLLPSARARSVLVNITSHGVSRTLPTADADDLVLFAELLLWLTAFDDMHGESNAARDLVALVDRTAELTLVLAGGSPPPLTNPFPAALYDLLARFRARTGPAAYLRLAASLRDTIMALVWEAHHVAEPERVALETYLEMRPHTVFVRTIFAAAEIVLDYELTDAQRALAPVRHLETAVANLAGWINDLASYEREAARGPAQPLSLPTLLRARHGGSLEEAFARAGGMCENEAAVARQGITSLAGDPPSALTAHARALEDIARSFVWHTSHARYQGPKRGAAPTSR</sequence>
<gene>
    <name evidence="4" type="primary">cldD</name>
</gene>